<keyword id="KW-0963">Cytoplasm</keyword>
<keyword id="KW-0342">GTP-binding</keyword>
<keyword id="KW-0436">Ligase</keyword>
<keyword id="KW-0460">Magnesium</keyword>
<keyword id="KW-0479">Metal-binding</keyword>
<keyword id="KW-0547">Nucleotide-binding</keyword>
<keyword id="KW-0658">Purine biosynthesis</keyword>
<feature type="chain" id="PRO_0000095187" description="Adenylosuccinate synthetase">
    <location>
        <begin position="1"/>
        <end position="411"/>
    </location>
</feature>
<feature type="active site" description="Proton acceptor" evidence="1">
    <location>
        <position position="12"/>
    </location>
</feature>
<feature type="active site" description="Proton donor" evidence="1">
    <location>
        <position position="40"/>
    </location>
</feature>
<feature type="binding site" evidence="1">
    <location>
        <begin position="11"/>
        <end position="17"/>
    </location>
    <ligand>
        <name>GTP</name>
        <dbReference type="ChEBI" id="CHEBI:37565"/>
    </ligand>
</feature>
<feature type="binding site" description="in other chain" evidence="1">
    <location>
        <begin position="12"/>
        <end position="15"/>
    </location>
    <ligand>
        <name>IMP</name>
        <dbReference type="ChEBI" id="CHEBI:58053"/>
        <note>ligand shared between dimeric partners</note>
    </ligand>
</feature>
<feature type="binding site" evidence="1">
    <location>
        <position position="12"/>
    </location>
    <ligand>
        <name>Mg(2+)</name>
        <dbReference type="ChEBI" id="CHEBI:18420"/>
    </ligand>
</feature>
<feature type="binding site" description="in other chain" evidence="1">
    <location>
        <begin position="37"/>
        <end position="40"/>
    </location>
    <ligand>
        <name>IMP</name>
        <dbReference type="ChEBI" id="CHEBI:58053"/>
        <note>ligand shared between dimeric partners</note>
    </ligand>
</feature>
<feature type="binding site" evidence="1">
    <location>
        <begin position="39"/>
        <end position="41"/>
    </location>
    <ligand>
        <name>GTP</name>
        <dbReference type="ChEBI" id="CHEBI:37565"/>
    </ligand>
</feature>
<feature type="binding site" evidence="1">
    <location>
        <position position="39"/>
    </location>
    <ligand>
        <name>Mg(2+)</name>
        <dbReference type="ChEBI" id="CHEBI:18420"/>
    </ligand>
</feature>
<feature type="binding site" description="in other chain" evidence="1">
    <location>
        <position position="121"/>
    </location>
    <ligand>
        <name>IMP</name>
        <dbReference type="ChEBI" id="CHEBI:58053"/>
        <note>ligand shared between dimeric partners</note>
    </ligand>
</feature>
<feature type="binding site" evidence="1">
    <location>
        <position position="135"/>
    </location>
    <ligand>
        <name>IMP</name>
        <dbReference type="ChEBI" id="CHEBI:58053"/>
        <note>ligand shared between dimeric partners</note>
    </ligand>
</feature>
<feature type="binding site" description="in other chain" evidence="1">
    <location>
        <position position="215"/>
    </location>
    <ligand>
        <name>IMP</name>
        <dbReference type="ChEBI" id="CHEBI:58053"/>
        <note>ligand shared between dimeric partners</note>
    </ligand>
</feature>
<feature type="binding site" description="in other chain" evidence="1">
    <location>
        <position position="230"/>
    </location>
    <ligand>
        <name>IMP</name>
        <dbReference type="ChEBI" id="CHEBI:58053"/>
        <note>ligand shared between dimeric partners</note>
    </ligand>
</feature>
<feature type="binding site" evidence="1">
    <location>
        <begin position="290"/>
        <end position="296"/>
    </location>
    <ligand>
        <name>substrate</name>
    </ligand>
</feature>
<feature type="binding site" description="in other chain" evidence="1">
    <location>
        <position position="294"/>
    </location>
    <ligand>
        <name>IMP</name>
        <dbReference type="ChEBI" id="CHEBI:58053"/>
        <note>ligand shared between dimeric partners</note>
    </ligand>
</feature>
<feature type="binding site" evidence="1">
    <location>
        <position position="296"/>
    </location>
    <ligand>
        <name>GTP</name>
        <dbReference type="ChEBI" id="CHEBI:37565"/>
    </ligand>
</feature>
<feature type="binding site" evidence="1">
    <location>
        <begin position="322"/>
        <end position="324"/>
    </location>
    <ligand>
        <name>GTP</name>
        <dbReference type="ChEBI" id="CHEBI:37565"/>
    </ligand>
</feature>
<feature type="binding site" evidence="1">
    <location>
        <begin position="400"/>
        <end position="402"/>
    </location>
    <ligand>
        <name>GTP</name>
        <dbReference type="ChEBI" id="CHEBI:37565"/>
    </ligand>
</feature>
<gene>
    <name evidence="1" type="primary">purA</name>
    <name type="ordered locus">jhp_0239</name>
</gene>
<evidence type="ECO:0000255" key="1">
    <source>
        <dbReference type="HAMAP-Rule" id="MF_00011"/>
    </source>
</evidence>
<protein>
    <recommendedName>
        <fullName evidence="1">Adenylosuccinate synthetase</fullName>
        <shortName evidence="1">AMPSase</shortName>
        <shortName evidence="1">AdSS</shortName>
        <ecNumber evidence="1">6.3.4.4</ecNumber>
    </recommendedName>
    <alternativeName>
        <fullName evidence="1">IMP--aspartate ligase</fullName>
    </alternativeName>
</protein>
<proteinExistence type="inferred from homology"/>
<sequence>MADVVVGIQWGDEGKGKIVDRIAKDYDFVVRYQGGHNAGHTIVHKGVKHSLHLMPSGVLYPKCKNIISSAVVVSVKDLCEEISAFEDLENRLFISDRAHVILPYHAKKDAFKEKSQNIGTTKKGIGPCYEDKMARSGIRMGDLLDDKILEEKLNAHFKAIEPFKKAYDLGENYEKDLMGYFKTYAPKICPFIKDTTSMLIEANQKGEKILLEGAQGTLLDIDLGTYPFVTSSNTTSASACVSTGLNPKAINEVIGITKAYSTRVGNGPFPSEDTTPMGDHLRTKGVEFGTTTKRPRRCGWLDLVALKYACALNGCTQLALMKLDVLDGIDAIKVCVAYERKGERLEAFPSDLKDCTPIYQTFKGWEKSVGVRKLDDLEPNAREYIRFIEKEVGVKIGLISTSPEREDTIFL</sequence>
<accession>Q9ZMI1</accession>
<dbReference type="EC" id="6.3.4.4" evidence="1"/>
<dbReference type="EMBL" id="AE001439">
    <property type="protein sequence ID" value="AAD05829.1"/>
    <property type="molecule type" value="Genomic_DNA"/>
</dbReference>
<dbReference type="PIR" id="A71955">
    <property type="entry name" value="A71955"/>
</dbReference>
<dbReference type="RefSeq" id="WP_000796150.1">
    <property type="nucleotide sequence ID" value="NC_000921.1"/>
</dbReference>
<dbReference type="SMR" id="Q9ZMI1"/>
<dbReference type="KEGG" id="hpj:jhp_0239"/>
<dbReference type="PATRIC" id="fig|85963.30.peg.775"/>
<dbReference type="eggNOG" id="COG0104">
    <property type="taxonomic scope" value="Bacteria"/>
</dbReference>
<dbReference type="UniPathway" id="UPA00075">
    <property type="reaction ID" value="UER00335"/>
</dbReference>
<dbReference type="Proteomes" id="UP000000804">
    <property type="component" value="Chromosome"/>
</dbReference>
<dbReference type="GO" id="GO:0005737">
    <property type="term" value="C:cytoplasm"/>
    <property type="evidence" value="ECO:0007669"/>
    <property type="project" value="UniProtKB-SubCell"/>
</dbReference>
<dbReference type="GO" id="GO:0004019">
    <property type="term" value="F:adenylosuccinate synthase activity"/>
    <property type="evidence" value="ECO:0007669"/>
    <property type="project" value="UniProtKB-UniRule"/>
</dbReference>
<dbReference type="GO" id="GO:0005525">
    <property type="term" value="F:GTP binding"/>
    <property type="evidence" value="ECO:0007669"/>
    <property type="project" value="UniProtKB-UniRule"/>
</dbReference>
<dbReference type="GO" id="GO:0000287">
    <property type="term" value="F:magnesium ion binding"/>
    <property type="evidence" value="ECO:0007669"/>
    <property type="project" value="UniProtKB-UniRule"/>
</dbReference>
<dbReference type="GO" id="GO:0044208">
    <property type="term" value="P:'de novo' AMP biosynthetic process"/>
    <property type="evidence" value="ECO:0007669"/>
    <property type="project" value="UniProtKB-UniRule"/>
</dbReference>
<dbReference type="GO" id="GO:0046040">
    <property type="term" value="P:IMP metabolic process"/>
    <property type="evidence" value="ECO:0007669"/>
    <property type="project" value="TreeGrafter"/>
</dbReference>
<dbReference type="CDD" id="cd03108">
    <property type="entry name" value="AdSS"/>
    <property type="match status" value="1"/>
</dbReference>
<dbReference type="FunFam" id="1.10.300.10:FF:000001">
    <property type="entry name" value="Adenylosuccinate synthetase"/>
    <property type="match status" value="1"/>
</dbReference>
<dbReference type="FunFam" id="3.90.170.10:FF:000004">
    <property type="entry name" value="Adenylosuccinate synthetase"/>
    <property type="match status" value="1"/>
</dbReference>
<dbReference type="Gene3D" id="3.40.440.10">
    <property type="entry name" value="Adenylosuccinate Synthetase, subunit A, domain 1"/>
    <property type="match status" value="1"/>
</dbReference>
<dbReference type="Gene3D" id="1.10.300.10">
    <property type="entry name" value="Adenylosuccinate Synthetase, subunit A, domain 2"/>
    <property type="match status" value="1"/>
</dbReference>
<dbReference type="Gene3D" id="3.90.170.10">
    <property type="entry name" value="Adenylosuccinate Synthetase, subunit A, domain 3"/>
    <property type="match status" value="1"/>
</dbReference>
<dbReference type="HAMAP" id="MF_00011">
    <property type="entry name" value="Adenylosucc_synth"/>
    <property type="match status" value="1"/>
</dbReference>
<dbReference type="InterPro" id="IPR018220">
    <property type="entry name" value="Adenylosuccin_syn_GTP-bd"/>
</dbReference>
<dbReference type="InterPro" id="IPR033128">
    <property type="entry name" value="Adenylosuccin_syn_Lys_AS"/>
</dbReference>
<dbReference type="InterPro" id="IPR042109">
    <property type="entry name" value="Adenylosuccinate_synth_dom1"/>
</dbReference>
<dbReference type="InterPro" id="IPR042110">
    <property type="entry name" value="Adenylosuccinate_synth_dom2"/>
</dbReference>
<dbReference type="InterPro" id="IPR042111">
    <property type="entry name" value="Adenylosuccinate_synth_dom3"/>
</dbReference>
<dbReference type="InterPro" id="IPR001114">
    <property type="entry name" value="Adenylosuccinate_synthetase"/>
</dbReference>
<dbReference type="InterPro" id="IPR027417">
    <property type="entry name" value="P-loop_NTPase"/>
</dbReference>
<dbReference type="NCBIfam" id="NF002223">
    <property type="entry name" value="PRK01117.1"/>
    <property type="match status" value="1"/>
</dbReference>
<dbReference type="NCBIfam" id="TIGR00184">
    <property type="entry name" value="purA"/>
    <property type="match status" value="1"/>
</dbReference>
<dbReference type="PANTHER" id="PTHR11846">
    <property type="entry name" value="ADENYLOSUCCINATE SYNTHETASE"/>
    <property type="match status" value="1"/>
</dbReference>
<dbReference type="PANTHER" id="PTHR11846:SF0">
    <property type="entry name" value="ADENYLOSUCCINATE SYNTHETASE"/>
    <property type="match status" value="1"/>
</dbReference>
<dbReference type="Pfam" id="PF00709">
    <property type="entry name" value="Adenylsucc_synt"/>
    <property type="match status" value="1"/>
</dbReference>
<dbReference type="SMART" id="SM00788">
    <property type="entry name" value="Adenylsucc_synt"/>
    <property type="match status" value="1"/>
</dbReference>
<dbReference type="SUPFAM" id="SSF52540">
    <property type="entry name" value="P-loop containing nucleoside triphosphate hydrolases"/>
    <property type="match status" value="1"/>
</dbReference>
<dbReference type="PROSITE" id="PS01266">
    <property type="entry name" value="ADENYLOSUCCIN_SYN_1"/>
    <property type="match status" value="1"/>
</dbReference>
<dbReference type="PROSITE" id="PS00513">
    <property type="entry name" value="ADENYLOSUCCIN_SYN_2"/>
    <property type="match status" value="1"/>
</dbReference>
<name>PURA_HELPJ</name>
<comment type="function">
    <text evidence="1">Plays an important role in the de novo pathway of purine nucleotide biosynthesis. Catalyzes the first committed step in the biosynthesis of AMP from IMP.</text>
</comment>
<comment type="catalytic activity">
    <reaction evidence="1">
        <text>IMP + L-aspartate + GTP = N(6)-(1,2-dicarboxyethyl)-AMP + GDP + phosphate + 2 H(+)</text>
        <dbReference type="Rhea" id="RHEA:15753"/>
        <dbReference type="ChEBI" id="CHEBI:15378"/>
        <dbReference type="ChEBI" id="CHEBI:29991"/>
        <dbReference type="ChEBI" id="CHEBI:37565"/>
        <dbReference type="ChEBI" id="CHEBI:43474"/>
        <dbReference type="ChEBI" id="CHEBI:57567"/>
        <dbReference type="ChEBI" id="CHEBI:58053"/>
        <dbReference type="ChEBI" id="CHEBI:58189"/>
        <dbReference type="EC" id="6.3.4.4"/>
    </reaction>
</comment>
<comment type="cofactor">
    <cofactor evidence="1">
        <name>Mg(2+)</name>
        <dbReference type="ChEBI" id="CHEBI:18420"/>
    </cofactor>
    <text evidence="1">Binds 1 Mg(2+) ion per subunit.</text>
</comment>
<comment type="pathway">
    <text evidence="1">Purine metabolism; AMP biosynthesis via de novo pathway; AMP from IMP: step 1/2.</text>
</comment>
<comment type="subunit">
    <text evidence="1">Homodimer.</text>
</comment>
<comment type="subcellular location">
    <subcellularLocation>
        <location evidence="1">Cytoplasm</location>
    </subcellularLocation>
</comment>
<comment type="similarity">
    <text evidence="1">Belongs to the adenylosuccinate synthetase family.</text>
</comment>
<reference key="1">
    <citation type="journal article" date="1999" name="Nature">
        <title>Genomic sequence comparison of two unrelated isolates of the human gastric pathogen Helicobacter pylori.</title>
        <authorList>
            <person name="Alm R.A."/>
            <person name="Ling L.-S.L."/>
            <person name="Moir D.T."/>
            <person name="King B.L."/>
            <person name="Brown E.D."/>
            <person name="Doig P.C."/>
            <person name="Smith D.R."/>
            <person name="Noonan B."/>
            <person name="Guild B.C."/>
            <person name="deJonge B.L."/>
            <person name="Carmel G."/>
            <person name="Tummino P.J."/>
            <person name="Caruso A."/>
            <person name="Uria-Nickelsen M."/>
            <person name="Mills D.M."/>
            <person name="Ives C."/>
            <person name="Gibson R."/>
            <person name="Merberg D."/>
            <person name="Mills S.D."/>
            <person name="Jiang Q."/>
            <person name="Taylor D.E."/>
            <person name="Vovis G.F."/>
            <person name="Trust T.J."/>
        </authorList>
    </citation>
    <scope>NUCLEOTIDE SEQUENCE [LARGE SCALE GENOMIC DNA]</scope>
    <source>
        <strain>J99 / ATCC 700824</strain>
    </source>
</reference>
<organism>
    <name type="scientific">Helicobacter pylori (strain J99 / ATCC 700824)</name>
    <name type="common">Campylobacter pylori J99</name>
    <dbReference type="NCBI Taxonomy" id="85963"/>
    <lineage>
        <taxon>Bacteria</taxon>
        <taxon>Pseudomonadati</taxon>
        <taxon>Campylobacterota</taxon>
        <taxon>Epsilonproteobacteria</taxon>
        <taxon>Campylobacterales</taxon>
        <taxon>Helicobacteraceae</taxon>
        <taxon>Helicobacter</taxon>
    </lineage>
</organism>